<evidence type="ECO:0000255" key="1">
    <source>
        <dbReference type="HAMAP-Rule" id="MF_00607"/>
    </source>
</evidence>
<name>RSMA_LEGPL</name>
<protein>
    <recommendedName>
        <fullName evidence="1">Ribosomal RNA small subunit methyltransferase A</fullName>
        <ecNumber evidence="1">2.1.1.182</ecNumber>
    </recommendedName>
    <alternativeName>
        <fullName evidence="1">16S rRNA (adenine(1518)-N(6)/adenine(1519)-N(6))-dimethyltransferase</fullName>
    </alternativeName>
    <alternativeName>
        <fullName evidence="1">16S rRNA dimethyladenosine transferase</fullName>
    </alternativeName>
    <alternativeName>
        <fullName evidence="1">16S rRNA dimethylase</fullName>
    </alternativeName>
    <alternativeName>
        <fullName evidence="1">S-adenosylmethionine-6-N', N'-adenosyl(rRNA) dimethyltransferase</fullName>
    </alternativeName>
</protein>
<comment type="function">
    <text evidence="1">Specifically dimethylates two adjacent adenosines (A1518 and A1519) in the loop of a conserved hairpin near the 3'-end of 16S rRNA in the 30S particle. May play a critical role in biogenesis of 30S subunits.</text>
</comment>
<comment type="catalytic activity">
    <reaction evidence="1">
        <text>adenosine(1518)/adenosine(1519) in 16S rRNA + 4 S-adenosyl-L-methionine = N(6)-dimethyladenosine(1518)/N(6)-dimethyladenosine(1519) in 16S rRNA + 4 S-adenosyl-L-homocysteine + 4 H(+)</text>
        <dbReference type="Rhea" id="RHEA:19609"/>
        <dbReference type="Rhea" id="RHEA-COMP:10232"/>
        <dbReference type="Rhea" id="RHEA-COMP:10233"/>
        <dbReference type="ChEBI" id="CHEBI:15378"/>
        <dbReference type="ChEBI" id="CHEBI:57856"/>
        <dbReference type="ChEBI" id="CHEBI:59789"/>
        <dbReference type="ChEBI" id="CHEBI:74411"/>
        <dbReference type="ChEBI" id="CHEBI:74493"/>
        <dbReference type="EC" id="2.1.1.182"/>
    </reaction>
</comment>
<comment type="subcellular location">
    <subcellularLocation>
        <location evidence="1">Cytoplasm</location>
    </subcellularLocation>
</comment>
<comment type="similarity">
    <text evidence="1">Belongs to the class I-like SAM-binding methyltransferase superfamily. rRNA adenine N(6)-methyltransferase family. RsmA subfamily.</text>
</comment>
<organism>
    <name type="scientific">Legionella pneumophila (strain Lens)</name>
    <dbReference type="NCBI Taxonomy" id="297245"/>
    <lineage>
        <taxon>Bacteria</taxon>
        <taxon>Pseudomonadati</taxon>
        <taxon>Pseudomonadota</taxon>
        <taxon>Gammaproteobacteria</taxon>
        <taxon>Legionellales</taxon>
        <taxon>Legionellaceae</taxon>
        <taxon>Legionella</taxon>
    </lineage>
</organism>
<keyword id="KW-0963">Cytoplasm</keyword>
<keyword id="KW-0489">Methyltransferase</keyword>
<keyword id="KW-0694">RNA-binding</keyword>
<keyword id="KW-0698">rRNA processing</keyword>
<keyword id="KW-0949">S-adenosyl-L-methionine</keyword>
<keyword id="KW-0808">Transferase</keyword>
<proteinExistence type="inferred from homology"/>
<sequence>MRHSPRKRFGQNFLQDKYIINEILRAINPLADDNMLEIGPGLGALTQPLLQKLNRLTAIEIDTDLQSYLTCLPVSQGKLNLIPADALTVDFCQFGPHLRVVGNLPYNISTPLLIYLLKFITCIDDMHFMLQKEVVERIAAAHGTKAYGRLSVMLQYHCEVEYLFDVPPEAFEPRPKVDSAIVRLTPHRVSPFESVNTEKLENIVAKAFAMRRKTLTNNLKGIISLSQLNDLGIDGGKRPEQISVAEYVQLAKFISN</sequence>
<feature type="chain" id="PRO_0000101549" description="Ribosomal RNA small subunit methyltransferase A">
    <location>
        <begin position="1"/>
        <end position="256"/>
    </location>
</feature>
<feature type="binding site" evidence="1">
    <location>
        <position position="12"/>
    </location>
    <ligand>
        <name>S-adenosyl-L-methionine</name>
        <dbReference type="ChEBI" id="CHEBI:59789"/>
    </ligand>
</feature>
<feature type="binding site" evidence="1">
    <location>
        <position position="14"/>
    </location>
    <ligand>
        <name>S-adenosyl-L-methionine</name>
        <dbReference type="ChEBI" id="CHEBI:59789"/>
    </ligand>
</feature>
<feature type="binding site" evidence="1">
    <location>
        <position position="39"/>
    </location>
    <ligand>
        <name>S-adenosyl-L-methionine</name>
        <dbReference type="ChEBI" id="CHEBI:59789"/>
    </ligand>
</feature>
<feature type="binding site" evidence="1">
    <location>
        <position position="60"/>
    </location>
    <ligand>
        <name>S-adenosyl-L-methionine</name>
        <dbReference type="ChEBI" id="CHEBI:59789"/>
    </ligand>
</feature>
<feature type="binding site" evidence="1">
    <location>
        <position position="85"/>
    </location>
    <ligand>
        <name>S-adenosyl-L-methionine</name>
        <dbReference type="ChEBI" id="CHEBI:59789"/>
    </ligand>
</feature>
<feature type="binding site" evidence="1">
    <location>
        <position position="103"/>
    </location>
    <ligand>
        <name>S-adenosyl-L-methionine</name>
        <dbReference type="ChEBI" id="CHEBI:59789"/>
    </ligand>
</feature>
<reference key="1">
    <citation type="journal article" date="2004" name="Nat. Genet.">
        <title>Evidence in the Legionella pneumophila genome for exploitation of host cell functions and high genome plasticity.</title>
        <authorList>
            <person name="Cazalet C."/>
            <person name="Rusniok C."/>
            <person name="Brueggemann H."/>
            <person name="Zidane N."/>
            <person name="Magnier A."/>
            <person name="Ma L."/>
            <person name="Tichit M."/>
            <person name="Jarraud S."/>
            <person name="Bouchier C."/>
            <person name="Vandenesch F."/>
            <person name="Kunst F."/>
            <person name="Etienne J."/>
            <person name="Glaser P."/>
            <person name="Buchrieser C."/>
        </authorList>
    </citation>
    <scope>NUCLEOTIDE SEQUENCE [LARGE SCALE GENOMIC DNA]</scope>
    <source>
        <strain>Lens</strain>
    </source>
</reference>
<dbReference type="EC" id="2.1.1.182" evidence="1"/>
<dbReference type="EMBL" id="CR628337">
    <property type="protein sequence ID" value="CAH17099.1"/>
    <property type="molecule type" value="Genomic_DNA"/>
</dbReference>
<dbReference type="RefSeq" id="WP_011216770.1">
    <property type="nucleotide sequence ID" value="NC_006369.1"/>
</dbReference>
<dbReference type="SMR" id="Q5WSM3"/>
<dbReference type="KEGG" id="lpf:lpl2855"/>
<dbReference type="LegioList" id="lpl2855"/>
<dbReference type="HOGENOM" id="CLU_041220_0_1_6"/>
<dbReference type="Proteomes" id="UP000002517">
    <property type="component" value="Chromosome"/>
</dbReference>
<dbReference type="GO" id="GO:0005829">
    <property type="term" value="C:cytosol"/>
    <property type="evidence" value="ECO:0007669"/>
    <property type="project" value="TreeGrafter"/>
</dbReference>
<dbReference type="GO" id="GO:0052908">
    <property type="term" value="F:16S rRNA (adenine(1518)-N(6)/adenine(1519)-N(6))-dimethyltransferase activity"/>
    <property type="evidence" value="ECO:0007669"/>
    <property type="project" value="UniProtKB-EC"/>
</dbReference>
<dbReference type="GO" id="GO:0003723">
    <property type="term" value="F:RNA binding"/>
    <property type="evidence" value="ECO:0007669"/>
    <property type="project" value="UniProtKB-KW"/>
</dbReference>
<dbReference type="FunFam" id="1.10.8.100:FF:000001">
    <property type="entry name" value="Ribosomal RNA small subunit methyltransferase A"/>
    <property type="match status" value="1"/>
</dbReference>
<dbReference type="Gene3D" id="1.10.8.100">
    <property type="entry name" value="Ribosomal RNA adenine dimethylase-like, domain 2"/>
    <property type="match status" value="1"/>
</dbReference>
<dbReference type="Gene3D" id="3.40.50.150">
    <property type="entry name" value="Vaccinia Virus protein VP39"/>
    <property type="match status" value="1"/>
</dbReference>
<dbReference type="HAMAP" id="MF_00607">
    <property type="entry name" value="16SrRNA_methyltr_A"/>
    <property type="match status" value="1"/>
</dbReference>
<dbReference type="InterPro" id="IPR001737">
    <property type="entry name" value="KsgA/Erm"/>
</dbReference>
<dbReference type="InterPro" id="IPR023165">
    <property type="entry name" value="rRNA_Ade_diMease-like_C"/>
</dbReference>
<dbReference type="InterPro" id="IPR020596">
    <property type="entry name" value="rRNA_Ade_Mease_Trfase_CS"/>
</dbReference>
<dbReference type="InterPro" id="IPR020598">
    <property type="entry name" value="rRNA_Ade_methylase_Trfase_N"/>
</dbReference>
<dbReference type="InterPro" id="IPR011530">
    <property type="entry name" value="rRNA_adenine_dimethylase"/>
</dbReference>
<dbReference type="InterPro" id="IPR029063">
    <property type="entry name" value="SAM-dependent_MTases_sf"/>
</dbReference>
<dbReference type="NCBIfam" id="TIGR00755">
    <property type="entry name" value="ksgA"/>
    <property type="match status" value="1"/>
</dbReference>
<dbReference type="PANTHER" id="PTHR11727">
    <property type="entry name" value="DIMETHYLADENOSINE TRANSFERASE"/>
    <property type="match status" value="1"/>
</dbReference>
<dbReference type="PANTHER" id="PTHR11727:SF7">
    <property type="entry name" value="DIMETHYLADENOSINE TRANSFERASE-RELATED"/>
    <property type="match status" value="1"/>
</dbReference>
<dbReference type="Pfam" id="PF00398">
    <property type="entry name" value="RrnaAD"/>
    <property type="match status" value="1"/>
</dbReference>
<dbReference type="SMART" id="SM00650">
    <property type="entry name" value="rADc"/>
    <property type="match status" value="1"/>
</dbReference>
<dbReference type="SUPFAM" id="SSF53335">
    <property type="entry name" value="S-adenosyl-L-methionine-dependent methyltransferases"/>
    <property type="match status" value="1"/>
</dbReference>
<dbReference type="PROSITE" id="PS01131">
    <property type="entry name" value="RRNA_A_DIMETH"/>
    <property type="match status" value="1"/>
</dbReference>
<dbReference type="PROSITE" id="PS51689">
    <property type="entry name" value="SAM_RNA_A_N6_MT"/>
    <property type="match status" value="1"/>
</dbReference>
<accession>Q5WSM3</accession>
<gene>
    <name evidence="1" type="primary">rsmA</name>
    <name evidence="1" type="synonym">ksgA</name>
    <name type="ordered locus">lpl2855</name>
</gene>